<reference key="1">
    <citation type="journal article" date="2005" name="Genome Res.">
        <title>Coping with cold: the genome of the versatile marine Antarctica bacterium Pseudoalteromonas haloplanktis TAC125.</title>
        <authorList>
            <person name="Medigue C."/>
            <person name="Krin E."/>
            <person name="Pascal G."/>
            <person name="Barbe V."/>
            <person name="Bernsel A."/>
            <person name="Bertin P.N."/>
            <person name="Cheung F."/>
            <person name="Cruveiller S."/>
            <person name="D'Amico S."/>
            <person name="Duilio A."/>
            <person name="Fang G."/>
            <person name="Feller G."/>
            <person name="Ho C."/>
            <person name="Mangenot S."/>
            <person name="Marino G."/>
            <person name="Nilsson J."/>
            <person name="Parrilli E."/>
            <person name="Rocha E.P.C."/>
            <person name="Rouy Z."/>
            <person name="Sekowska A."/>
            <person name="Tutino M.L."/>
            <person name="Vallenet D."/>
            <person name="von Heijne G."/>
            <person name="Danchin A."/>
        </authorList>
    </citation>
    <scope>NUCLEOTIDE SEQUENCE [LARGE SCALE GENOMIC DNA]</scope>
    <source>
        <strain>TAC 125</strain>
    </source>
</reference>
<sequence length="60" mass="6664">MANQTVKVTQVKSSIGRLPKHKATLRGLGLRRINHTVELEDTACVRGMINQVSYMVKVEG</sequence>
<dbReference type="EMBL" id="CR954246">
    <property type="protein sequence ID" value="CAI87849.1"/>
    <property type="molecule type" value="Genomic_DNA"/>
</dbReference>
<dbReference type="SMR" id="Q3IJK3"/>
<dbReference type="STRING" id="326442.PSHAa2812"/>
<dbReference type="KEGG" id="pha:PSHAa2812"/>
<dbReference type="eggNOG" id="COG1841">
    <property type="taxonomic scope" value="Bacteria"/>
</dbReference>
<dbReference type="HOGENOM" id="CLU_131047_1_4_6"/>
<dbReference type="BioCyc" id="PHAL326442:PSHA_RS13805-MONOMER"/>
<dbReference type="Proteomes" id="UP000006843">
    <property type="component" value="Chromosome I"/>
</dbReference>
<dbReference type="GO" id="GO:0022625">
    <property type="term" value="C:cytosolic large ribosomal subunit"/>
    <property type="evidence" value="ECO:0007669"/>
    <property type="project" value="TreeGrafter"/>
</dbReference>
<dbReference type="GO" id="GO:0003735">
    <property type="term" value="F:structural constituent of ribosome"/>
    <property type="evidence" value="ECO:0007669"/>
    <property type="project" value="InterPro"/>
</dbReference>
<dbReference type="GO" id="GO:0006412">
    <property type="term" value="P:translation"/>
    <property type="evidence" value="ECO:0007669"/>
    <property type="project" value="UniProtKB-UniRule"/>
</dbReference>
<dbReference type="CDD" id="cd01658">
    <property type="entry name" value="Ribosomal_L30"/>
    <property type="match status" value="1"/>
</dbReference>
<dbReference type="FunFam" id="3.30.1390.20:FF:000001">
    <property type="entry name" value="50S ribosomal protein L30"/>
    <property type="match status" value="1"/>
</dbReference>
<dbReference type="Gene3D" id="3.30.1390.20">
    <property type="entry name" value="Ribosomal protein L30, ferredoxin-like fold domain"/>
    <property type="match status" value="1"/>
</dbReference>
<dbReference type="HAMAP" id="MF_01371_B">
    <property type="entry name" value="Ribosomal_uL30_B"/>
    <property type="match status" value="1"/>
</dbReference>
<dbReference type="InterPro" id="IPR036919">
    <property type="entry name" value="Ribo_uL30_ferredoxin-like_sf"/>
</dbReference>
<dbReference type="InterPro" id="IPR005996">
    <property type="entry name" value="Ribosomal_uL30_bac-type"/>
</dbReference>
<dbReference type="InterPro" id="IPR018038">
    <property type="entry name" value="Ribosomal_uL30_CS"/>
</dbReference>
<dbReference type="InterPro" id="IPR016082">
    <property type="entry name" value="Ribosomal_uL30_ferredoxin-like"/>
</dbReference>
<dbReference type="NCBIfam" id="TIGR01308">
    <property type="entry name" value="rpmD_bact"/>
    <property type="match status" value="1"/>
</dbReference>
<dbReference type="PANTHER" id="PTHR15892:SF2">
    <property type="entry name" value="LARGE RIBOSOMAL SUBUNIT PROTEIN UL30M"/>
    <property type="match status" value="1"/>
</dbReference>
<dbReference type="PANTHER" id="PTHR15892">
    <property type="entry name" value="MITOCHONDRIAL RIBOSOMAL PROTEIN L30"/>
    <property type="match status" value="1"/>
</dbReference>
<dbReference type="Pfam" id="PF00327">
    <property type="entry name" value="Ribosomal_L30"/>
    <property type="match status" value="1"/>
</dbReference>
<dbReference type="PIRSF" id="PIRSF002211">
    <property type="entry name" value="Ribosomal_L30_bac-type"/>
    <property type="match status" value="1"/>
</dbReference>
<dbReference type="SUPFAM" id="SSF55129">
    <property type="entry name" value="Ribosomal protein L30p/L7e"/>
    <property type="match status" value="1"/>
</dbReference>
<dbReference type="PROSITE" id="PS00634">
    <property type="entry name" value="RIBOSOMAL_L30"/>
    <property type="match status" value="1"/>
</dbReference>
<protein>
    <recommendedName>
        <fullName evidence="1">Large ribosomal subunit protein uL30</fullName>
    </recommendedName>
    <alternativeName>
        <fullName evidence="2">50S ribosomal protein L30</fullName>
    </alternativeName>
</protein>
<proteinExistence type="inferred from homology"/>
<comment type="subunit">
    <text evidence="1">Part of the 50S ribosomal subunit.</text>
</comment>
<comment type="similarity">
    <text evidence="1">Belongs to the universal ribosomal protein uL30 family.</text>
</comment>
<gene>
    <name evidence="1" type="primary">rpmD</name>
    <name type="ordered locus">PSHAa2812</name>
</gene>
<organism>
    <name type="scientific">Pseudoalteromonas translucida (strain TAC 125)</name>
    <dbReference type="NCBI Taxonomy" id="326442"/>
    <lineage>
        <taxon>Bacteria</taxon>
        <taxon>Pseudomonadati</taxon>
        <taxon>Pseudomonadota</taxon>
        <taxon>Gammaproteobacteria</taxon>
        <taxon>Alteromonadales</taxon>
        <taxon>Pseudoalteromonadaceae</taxon>
        <taxon>Pseudoalteromonas</taxon>
    </lineage>
</organism>
<feature type="chain" id="PRO_0000273825" description="Large ribosomal subunit protein uL30">
    <location>
        <begin position="1"/>
        <end position="60"/>
    </location>
</feature>
<keyword id="KW-1185">Reference proteome</keyword>
<keyword id="KW-0687">Ribonucleoprotein</keyword>
<keyword id="KW-0689">Ribosomal protein</keyword>
<accession>Q3IJK3</accession>
<name>RL30_PSET1</name>
<evidence type="ECO:0000255" key="1">
    <source>
        <dbReference type="HAMAP-Rule" id="MF_01371"/>
    </source>
</evidence>
<evidence type="ECO:0000305" key="2"/>